<reference key="1">
    <citation type="journal article" date="1989" name="Genes Dev.">
        <title>A gene with homology to the myc similarity region of MyoD1 is expressed during myogenesis and is sufficient to activate the muscle differentiation program.</title>
        <authorList>
            <person name="Edmondson D.G."/>
            <person name="Olson E.N."/>
        </authorList>
    </citation>
    <scope>NUCLEOTIDE SEQUENCE [MRNA]</scope>
    <source>
        <strain>BALB/cJ</strain>
        <tissue>Muscle</tissue>
    </source>
</reference>
<reference key="2">
    <citation type="journal article" date="1990" name="Genes Dev.">
        <authorList>
            <person name="Edmondson D.G."/>
            <person name="Olson E.N."/>
        </authorList>
    </citation>
    <scope>ERRATUM OF PUBMED:2473006</scope>
</reference>
<reference key="3">
    <citation type="journal article" date="1992" name="Mol. Cell. Biol.">
        <title>Analysis of the myogenin promoter reveals an indirect pathway for positive autoregulation mediated by the muscle-specific enhancer factor MEF-2.</title>
        <authorList>
            <person name="Edmondson D.G."/>
            <person name="Cheng T.C."/>
            <person name="Cserjesi P."/>
            <person name="Chakraborty T."/>
            <person name="Olson E.N."/>
        </authorList>
    </citation>
    <scope>NUCLEOTIDE SEQUENCE [GENOMIC DNA]</scope>
</reference>
<reference key="4">
    <citation type="journal article" date="1990" name="J. Biol. Chem.">
        <title>Myogenin contains two domains conserved among myogenic factors.</title>
        <authorList>
            <person name="Fujisawa-Sehara A."/>
            <person name="Nabeshima Y."/>
            <person name="Hosoda Y."/>
            <person name="Obinata T."/>
            <person name="Nabeshima Y."/>
        </authorList>
    </citation>
    <scope>NUCLEOTIDE SEQUENCE [MRNA]</scope>
</reference>
<reference key="5">
    <citation type="journal article" date="2004" name="Genome Res.">
        <title>The status, quality, and expansion of the NIH full-length cDNA project: the Mammalian Gene Collection (MGC).</title>
        <authorList>
            <consortium name="The MGC Project Team"/>
        </authorList>
    </citation>
    <scope>NUCLEOTIDE SEQUENCE [LARGE SCALE MRNA]</scope>
    <source>
        <tissue>Limb</tissue>
    </source>
</reference>
<reference key="6">
    <citation type="journal article" date="1989" name="Nature">
        <title>Expression of two myogenic regulatory factors myogenin and MyoD1 during mouse embryogenesis.</title>
        <authorList>
            <person name="Sassoon D."/>
            <person name="Lyons G."/>
            <person name="Wright W.E."/>
            <person name="Lin V."/>
            <person name="Lassar A."/>
            <person name="Weintraub H."/>
            <person name="Buckingham M."/>
        </authorList>
    </citation>
    <scope>DEVELOPMENTAL STAGE</scope>
</reference>
<reference key="7">
    <citation type="journal article" date="1991" name="Proc. Natl. Acad. Sci. U.S.A.">
        <title>Myogenin and MyoD join a family of skeletal muscle genes regulated by electrical activity.</title>
        <authorList>
            <person name="Eftimie R."/>
            <person name="Brenner H.R."/>
            <person name="Buonanno A."/>
        </authorList>
    </citation>
    <scope>DEVELOPMENTAL STAGE</scope>
</reference>
<reference key="8">
    <citation type="journal article" date="1993" name="Nature">
        <title>Muscle deficiency and neonatal death in mice with a targeted mutation in the myogenin gene.</title>
        <authorList>
            <person name="Hasty P."/>
            <person name="Bradley A."/>
            <person name="Morris J.H."/>
            <person name="Edmondson D.G."/>
            <person name="Venuti J.M."/>
            <person name="Olson E.N."/>
            <person name="Klein W.H."/>
        </authorList>
    </citation>
    <scope>FUNCTION</scope>
    <scope>DISRUPTION PHENOTYPE</scope>
</reference>
<reference key="9">
    <citation type="journal article" date="1993" name="Nature">
        <title>Myogenin gene disruption results in perinatal lethality because of severe muscle defect.</title>
        <authorList>
            <person name="Nabeshima Y."/>
            <person name="Hanaoka K."/>
            <person name="Hayasaka M."/>
            <person name="Esumi E."/>
            <person name="Li S."/>
            <person name="Nonaka I."/>
            <person name="Nabeshima Y."/>
        </authorList>
    </citation>
    <scope>FUNCTION</scope>
    <scope>DISRUPTION PHENOTYPE</scope>
</reference>
<reference key="10">
    <citation type="journal article" date="1994" name="J. Cell Biol.">
        <title>Somite subdomains, muscle cell origins, and the four muscle regulatory factor proteins.</title>
        <authorList>
            <person name="Smith T.H."/>
            <person name="Kachinsky A.M."/>
            <person name="Miller J.B."/>
        </authorList>
    </citation>
    <scope>DEVELOPMENTAL STAGE</scope>
</reference>
<reference key="11">
    <citation type="journal article" date="2002" name="Biochemistry">
        <title>Analysis of the DNA-binding properties of MyoD, myogenin, and E12 by fluorescence anisotropy.</title>
        <authorList>
            <person name="Maleki S.J."/>
            <person name="Royer C.A."/>
            <person name="Hurlburt B.K."/>
        </authorList>
    </citation>
    <scope>SUBUNIT</scope>
</reference>
<reference key="12">
    <citation type="journal article" date="2005" name="Genes Dev.">
        <title>An initial blueprint for myogenic differentiation.</title>
        <authorList>
            <person name="Blais A."/>
            <person name="Tsikitis M."/>
            <person name="Acosta-Alvear D."/>
            <person name="Sharan R."/>
            <person name="Kluger Y."/>
            <person name="Dynlacht B.D."/>
        </authorList>
    </citation>
    <scope>FUNCTION</scope>
    <scope>PROMOTER BINDING</scope>
</reference>
<reference key="13">
    <citation type="journal article" date="2006" name="Development">
        <title>Loss of myogenin in postnatal life leads to normal skeletal muscle but reduced body size.</title>
        <authorList>
            <person name="Knapp J.R."/>
            <person name="Davie J.K."/>
            <person name="Myer A."/>
            <person name="Meadows E."/>
            <person name="Olson E.N."/>
            <person name="Klein W.H."/>
        </authorList>
    </citation>
    <scope>FUNCTION</scope>
    <scope>CONDITIONAL KNOCKOUT IN MUSCLE CELLS</scope>
</reference>
<reference key="14">
    <citation type="journal article" date="2006" name="EMBO J.">
        <title>Skeletal muscle specification by myogenin and Mef2D via the SWI/SNF ATPase Brg1.</title>
        <authorList>
            <person name="Ohkawa Y."/>
            <person name="Marfella C.G."/>
            <person name="Imbalzano A.N."/>
        </authorList>
    </citation>
    <scope>FUNCTION</scope>
    <scope>INTERACTION WITH SMARCA4</scope>
    <scope>SUBCELLULAR LOCATION</scope>
</reference>
<reference key="15">
    <citation type="journal article" date="2006" name="EMBO J.">
        <title>Global and gene-specific analyses show distinct roles for Myod and Myog at a common set of promoters.</title>
        <authorList>
            <person name="Cao Y."/>
            <person name="Kumar R.M."/>
            <person name="Penn B.H."/>
            <person name="Berkes C.A."/>
            <person name="Kooperberg C."/>
            <person name="Boyer L.A."/>
            <person name="Young R.A."/>
            <person name="Tapscott S.J."/>
        </authorList>
    </citation>
    <scope>FUNCTION</scope>
</reference>
<reference key="16">
    <citation type="journal article" date="2011" name="J. Cell. Biochem.">
        <title>Myogenin regulates denervation-dependent muscle atrophy in mouse soleus muscle.</title>
        <authorList>
            <person name="Macpherson P.C."/>
            <person name="Wang X."/>
            <person name="Goldman D."/>
        </authorList>
    </citation>
    <scope>FUNCTION</scope>
    <scope>CONDITIONAL KNOCKOUT IN MUSCLE CELLS</scope>
    <scope>INDUCTION</scope>
    <scope>TISSUE SPECIFICITY</scope>
</reference>
<reference key="17">
    <citation type="journal article" date="2011" name="Skelet. Muscle">
        <title>Sequential association of myogenic regulatory factors and E proteins at muscle-specific genes.</title>
        <authorList>
            <person name="Londhe P."/>
            <person name="Davie J.K."/>
        </authorList>
    </citation>
    <scope>FUNCTION</scope>
    <scope>PROMOTER BINDING</scope>
    <scope>INDUCTION</scope>
    <scope>TISSUE SPECIFICITY</scope>
</reference>
<reference key="18">
    <citation type="journal article" date="2012" name="J. Mol. Cell Biol.">
        <title>Comparative expression profiling identifies differential roles for Myogenin and p38alpha MAPK signaling in myogenesis.</title>
        <authorList>
            <person name="Liu Q.C."/>
            <person name="Zha X.H."/>
            <person name="Faralli H."/>
            <person name="Yin H."/>
            <person name="Louis-Jeune C."/>
            <person name="Perdiguero E."/>
            <person name="Pranckeviciene E."/>
            <person name="Munoz-Canoves P."/>
            <person name="Rudnicki M.A."/>
            <person name="Brand M."/>
            <person name="Perez-Iratxeta C."/>
            <person name="Dilworth F.J."/>
        </authorList>
    </citation>
    <scope>FUNCTION</scope>
    <scope>INDUCTION</scope>
</reference>
<reference key="19">
    <citation type="journal article" date="2012" name="PLoS ONE">
        <title>Down-regulation of myogenin can reverse terminal muscle cell differentiation.</title>
        <authorList>
            <person name="Mastroyiannopoulos N.P."/>
            <person name="Nicolaou P."/>
            <person name="Anayasa M."/>
            <person name="Uney J.B."/>
            <person name="Phylactou L.A."/>
        </authorList>
    </citation>
    <scope>FUNCTION IN MUSCLE DEDIFFERENTIATION INHIBITION</scope>
</reference>
<reference key="20">
    <citation type="journal article" date="2013" name="J. Biol. Chem.">
        <title>Myogenin recruits the histone chaperone facilitates chromatin transcription (FACT) to promote nucleosome disassembly at muscle-specific genes.</title>
        <authorList>
            <person name="Lolis A.A."/>
            <person name="Londhe P."/>
            <person name="Beggs B.C."/>
            <person name="Byrum S.D."/>
            <person name="Tackett A.J."/>
            <person name="Davie J.K."/>
        </authorList>
    </citation>
    <scope>FUNCTION</scope>
    <scope>INTERACTION WITH SSRP1 AND SUPT16H</scope>
</reference>
<proteinExistence type="evidence at protein level"/>
<comment type="function">
    <text evidence="5 6 7 8 10 11 12 13 14 17 18">Acts as a transcriptional activator that promotes transcription of muscle-specific target genes and plays a role in muscle differentiation, cell cycle exit and muscle atrophy. Essential for the development of functional embryonic skeletal fiber muscle differentiation. However is dispensable for postnatal skeletal muscle growth; phosphorylation by CAMK2G inhibits its transcriptional activity in respons to muscle activity. Required for the recruitment of the FACT complex to muscle-specific promoter regions, thus promoting gene expression initiation. During terminal myoblast differentiation, plays a role as a strong activator of transcription at loci with an open chromatin structure previously initiated by MYOD1. Together with MYF5 and MYOD1, co-occupies muscle-specific gene promoter core regions during myogenesis. Also cooperates with myocyte-specific enhancer factor MEF2D and BRG1-dependent recruitment of SWI/SNF chromatin-remodeling enzymes to alter chromatin structure at myogenic late gene promoters. Facilitates cell cycle exit during terminal muscle differentiation through the up-regulation of miR-20a expression, which in turn represses genes involved in cell cycle progression. Binds to the E-box containing (E1) promoter region of the miR-20a gene. Also plays a role in preventing reversal of muscle cell differentiation. Contributes to the atrophy-related gene expression in adult denervated muscles. Induces fibroblasts to differentiate into myoblasts.</text>
</comment>
<comment type="subunit">
    <text evidence="2 4 7 14">Homodimer and heterodimer with E12; heterodimerization enhances MYOG DNA-binding and transcriptional activities. Interacts with SMARCA4/BRG1/BAF190A. Interacts (via C-terminal region) with SSRP1 and SUPT16H; the interaction is indicative of an interaction with the FACT complex. nteracts with CSRP3 (By similarity).</text>
</comment>
<comment type="interaction">
    <interactant intactId="EBI-7132875">
        <id>P12979</id>
    </interactant>
    <interactant intactId="EBI-2639094">
        <id>Q60929</id>
        <label>Mef2a</label>
    </interactant>
    <organismsDiffer>false</organismsDiffer>
    <experiments>2</experiments>
</comment>
<comment type="subcellular location">
    <subcellularLocation>
        <location evidence="3 7">Nucleus</location>
    </subcellularLocation>
    <text>Recruited to late myogenic gene promoter regulatory sequences with SMARCA4/BRG1/BAF190A and SWI/SNF chromatin-remodeling enzymes to promote chromatin-remodeling and transcription initiation in developing embryos.</text>
</comment>
<comment type="tissue specificity">
    <text evidence="10 11">Expressed in myoblast cells. Expressed weakly in myotubes (at protein level). Expressed strongly in denervated muscles and in satellite cells isolated from denervated muscles. Expressed weakly in innervated muscle and in satellite cells isolated from innervated muscles.</text>
</comment>
<comment type="developmental stage">
    <text evidence="9 15 16">Expressed in the myotome of the somites at 8.5 dpc, onward (at protein level). Expressed in proximal region of both the hindlimb and the forelimb at 11.5 dpc, onward. Expressed during muscle maturation between 15 and 17 dpc and decreases thereafter. Not detected within the heart.</text>
</comment>
<comment type="induction">
    <text evidence="10 11 13">Up-regulated in denervated muscles (at protein level). Up-regulated during myogenesis in the embryo and in cell culture models of myogenic differentiation via the p38 MAPK signaling pathway.</text>
</comment>
<comment type="PTM">
    <text evidence="1">Phosphorylated by CAMK2G on threonine and serine amino acids in a muscle activity-dependent manner. Phosphorylation of Thr-87 impairs both DNA-binding and trans-activation functions in contracting muscles (By similarity).</text>
</comment>
<comment type="disruption phenotype">
    <text evidence="17 18">Display normal myoblast formation during embryogenesis, but show perinatal lethality because of a deficiency during the later stages of skeletal muscle fiber formation. Show no abnormalities for smooth muscles and cardiocytes differentiation. Conditional mutant with expression abrogated in muscle cells from 15.5 or 17.5 dpc are viable, fertil and exhibit no noticeable muscle growth and reduction of myofiber diameter defects but show smaller body size and mass. Conditional mutant in muscle cells of denervated hindlimb muscles show an inhibition of the denervation-dependent reductions in mass, force and atrophy of slow fiber-type soleus muscles, without increased in satellite cell proliferation and fusion.</text>
</comment>
<evidence type="ECO:0000250" key="1"/>
<evidence type="ECO:0000250" key="2">
    <source>
        <dbReference type="UniProtKB" id="P20428"/>
    </source>
</evidence>
<evidence type="ECO:0000255" key="3">
    <source>
        <dbReference type="PROSITE-ProRule" id="PRU00981"/>
    </source>
</evidence>
<evidence type="ECO:0000269" key="4">
    <source>
    </source>
</evidence>
<evidence type="ECO:0000269" key="5">
    <source>
    </source>
</evidence>
<evidence type="ECO:0000269" key="6">
    <source>
    </source>
</evidence>
<evidence type="ECO:0000269" key="7">
    <source>
    </source>
</evidence>
<evidence type="ECO:0000269" key="8">
    <source>
    </source>
</evidence>
<evidence type="ECO:0000269" key="9">
    <source>
    </source>
</evidence>
<evidence type="ECO:0000269" key="10">
    <source>
    </source>
</evidence>
<evidence type="ECO:0000269" key="11">
    <source>
    </source>
</evidence>
<evidence type="ECO:0000269" key="12">
    <source>
    </source>
</evidence>
<evidence type="ECO:0000269" key="13">
    <source>
    </source>
</evidence>
<evidence type="ECO:0000269" key="14">
    <source>
    </source>
</evidence>
<evidence type="ECO:0000269" key="15">
    <source>
    </source>
</evidence>
<evidence type="ECO:0000269" key="16">
    <source>
    </source>
</evidence>
<evidence type="ECO:0000269" key="17">
    <source>
    </source>
</evidence>
<evidence type="ECO:0000269" key="18">
    <source>
    </source>
</evidence>
<feature type="chain" id="PRO_0000127376" description="Myogenin">
    <location>
        <begin position="1"/>
        <end position="224"/>
    </location>
</feature>
<feature type="domain" description="bHLH" evidence="3">
    <location>
        <begin position="81"/>
        <end position="132"/>
    </location>
</feature>
<feature type="modified residue" description="Phosphoserine; by CaMK2G" evidence="2">
    <location>
        <position position="77"/>
    </location>
</feature>
<feature type="modified residue" description="Phosphoserine; by CaMK2G" evidence="2">
    <location>
        <position position="79"/>
    </location>
</feature>
<feature type="modified residue" description="Phosphothreonine; by CaMK2G" evidence="2">
    <location>
        <position position="87"/>
    </location>
</feature>
<gene>
    <name type="primary">Myog</name>
</gene>
<sequence>MELYETSPYFYQEPHFYDGENYLPVHLQGFEPPGYERTELSLSPEARGPLEEKGLGTPEHCPGQCLPWACKVCKRKSVSVDRRRAATLREKRRLKKVNEAFEALKRSTLLNPNQRLPKVEILRSAIQYIERLQALLSSLNQEERDLRYRGGGGPQPMVPSECNSHSASCSPEWGNALEFGPNPGDHLLAADPTDAHNLHSLTSIVDSITVEDMSVAFPDETMPN</sequence>
<name>MYOG_MOUSE</name>
<accession>P12979</accession>
<keyword id="KW-0010">Activator</keyword>
<keyword id="KW-0131">Cell cycle</keyword>
<keyword id="KW-0217">Developmental protein</keyword>
<keyword id="KW-0221">Differentiation</keyword>
<keyword id="KW-0238">DNA-binding</keyword>
<keyword id="KW-0517">Myogenesis</keyword>
<keyword id="KW-0539">Nucleus</keyword>
<keyword id="KW-0597">Phosphoprotein</keyword>
<keyword id="KW-1185">Reference proteome</keyword>
<keyword id="KW-0804">Transcription</keyword>
<keyword id="KW-0805">Transcription regulation</keyword>
<organism>
    <name type="scientific">Mus musculus</name>
    <name type="common">Mouse</name>
    <dbReference type="NCBI Taxonomy" id="10090"/>
    <lineage>
        <taxon>Eukaryota</taxon>
        <taxon>Metazoa</taxon>
        <taxon>Chordata</taxon>
        <taxon>Craniata</taxon>
        <taxon>Vertebrata</taxon>
        <taxon>Euteleostomi</taxon>
        <taxon>Mammalia</taxon>
        <taxon>Eutheria</taxon>
        <taxon>Euarchontoglires</taxon>
        <taxon>Glires</taxon>
        <taxon>Rodentia</taxon>
        <taxon>Myomorpha</taxon>
        <taxon>Muroidea</taxon>
        <taxon>Muridae</taxon>
        <taxon>Murinae</taxon>
        <taxon>Mus</taxon>
        <taxon>Mus</taxon>
    </lineage>
</organism>
<dbReference type="EMBL" id="M95800">
    <property type="protein sequence ID" value="AAB59676.1"/>
    <property type="molecule type" value="Genomic_DNA"/>
</dbReference>
<dbReference type="EMBL" id="X15784">
    <property type="protein sequence ID" value="CAA33785.1"/>
    <property type="status" value="ALT_SEQ"/>
    <property type="molecule type" value="mRNA"/>
</dbReference>
<dbReference type="EMBL" id="D90156">
    <property type="protein sequence ID" value="BAA14187.1"/>
    <property type="molecule type" value="mRNA"/>
</dbReference>
<dbReference type="EMBL" id="BC048683">
    <property type="protein sequence ID" value="AAH48683.1"/>
    <property type="molecule type" value="mRNA"/>
</dbReference>
<dbReference type="EMBL" id="BC068019">
    <property type="protein sequence ID" value="AAH68019.1"/>
    <property type="molecule type" value="mRNA"/>
</dbReference>
<dbReference type="CCDS" id="CCDS15306.1"/>
<dbReference type="PIR" id="A35882">
    <property type="entry name" value="A36675"/>
</dbReference>
<dbReference type="RefSeq" id="NP_112466.1">
    <property type="nucleotide sequence ID" value="NM_031189.2"/>
</dbReference>
<dbReference type="SMR" id="P12979"/>
<dbReference type="BioGRID" id="201674">
    <property type="interactions" value="7"/>
</dbReference>
<dbReference type="CORUM" id="P12979"/>
<dbReference type="DIP" id="DIP-29976N"/>
<dbReference type="FunCoup" id="P12979">
    <property type="interactions" value="594"/>
</dbReference>
<dbReference type="IntAct" id="P12979">
    <property type="interactions" value="6"/>
</dbReference>
<dbReference type="MINT" id="P12979"/>
<dbReference type="STRING" id="10090.ENSMUSP00000027730"/>
<dbReference type="GlyGen" id="P12979">
    <property type="glycosylation" value="1 site"/>
</dbReference>
<dbReference type="iPTMnet" id="P12979"/>
<dbReference type="PhosphoSitePlus" id="P12979"/>
<dbReference type="PaxDb" id="10090-ENSMUSP00000027730"/>
<dbReference type="ABCD" id="P12979">
    <property type="antibodies" value="1 sequenced antibody"/>
</dbReference>
<dbReference type="Antibodypedia" id="20659">
    <property type="antibodies" value="1134 antibodies from 41 providers"/>
</dbReference>
<dbReference type="DNASU" id="17928"/>
<dbReference type="Ensembl" id="ENSMUST00000027730.6">
    <property type="protein sequence ID" value="ENSMUSP00000027730.5"/>
    <property type="gene ID" value="ENSMUSG00000026459.6"/>
</dbReference>
<dbReference type="GeneID" id="17928"/>
<dbReference type="KEGG" id="mmu:17928"/>
<dbReference type="UCSC" id="uc007crl.2">
    <property type="organism name" value="mouse"/>
</dbReference>
<dbReference type="AGR" id="MGI:97276"/>
<dbReference type="CTD" id="4656"/>
<dbReference type="MGI" id="MGI:97276">
    <property type="gene designation" value="Myog"/>
</dbReference>
<dbReference type="VEuPathDB" id="HostDB:ENSMUSG00000026459"/>
<dbReference type="eggNOG" id="KOG3960">
    <property type="taxonomic scope" value="Eukaryota"/>
</dbReference>
<dbReference type="GeneTree" id="ENSGT00950000182959"/>
<dbReference type="HOGENOM" id="CLU_100258_0_0_1"/>
<dbReference type="InParanoid" id="P12979"/>
<dbReference type="OMA" id="QELGGWW"/>
<dbReference type="OrthoDB" id="10049614at2759"/>
<dbReference type="PhylomeDB" id="P12979"/>
<dbReference type="TreeFam" id="TF316344"/>
<dbReference type="Reactome" id="R-MMU-525793">
    <property type="pathway name" value="Myogenesis"/>
</dbReference>
<dbReference type="BioGRID-ORCS" id="17928">
    <property type="hits" value="0 hits in 76 CRISPR screens"/>
</dbReference>
<dbReference type="PRO" id="PR:P12979"/>
<dbReference type="Proteomes" id="UP000000589">
    <property type="component" value="Chromosome 1"/>
</dbReference>
<dbReference type="RNAct" id="P12979">
    <property type="molecule type" value="protein"/>
</dbReference>
<dbReference type="Bgee" id="ENSMUSG00000026459">
    <property type="expression patterns" value="Expressed in myotome and 112 other cell types or tissues"/>
</dbReference>
<dbReference type="GO" id="GO:0005654">
    <property type="term" value="C:nucleoplasm"/>
    <property type="evidence" value="ECO:0007669"/>
    <property type="project" value="Ensembl"/>
</dbReference>
<dbReference type="GO" id="GO:0005634">
    <property type="term" value="C:nucleus"/>
    <property type="evidence" value="ECO:0000314"/>
    <property type="project" value="MGI"/>
</dbReference>
<dbReference type="GO" id="GO:0032993">
    <property type="term" value="C:protein-DNA complex"/>
    <property type="evidence" value="ECO:0000250"/>
    <property type="project" value="UniProtKB"/>
</dbReference>
<dbReference type="GO" id="GO:0031490">
    <property type="term" value="F:chromatin DNA binding"/>
    <property type="evidence" value="ECO:0000314"/>
    <property type="project" value="UniProtKB"/>
</dbReference>
<dbReference type="GO" id="GO:0000987">
    <property type="term" value="F:cis-regulatory region sequence-specific DNA binding"/>
    <property type="evidence" value="ECO:0000314"/>
    <property type="project" value="MGI"/>
</dbReference>
<dbReference type="GO" id="GO:0001216">
    <property type="term" value="F:DNA-binding transcription activator activity"/>
    <property type="evidence" value="ECO:0000314"/>
    <property type="project" value="UniProtKB"/>
</dbReference>
<dbReference type="GO" id="GO:0001228">
    <property type="term" value="F:DNA-binding transcription activator activity, RNA polymerase II-specific"/>
    <property type="evidence" value="ECO:0000314"/>
    <property type="project" value="NTNU_SB"/>
</dbReference>
<dbReference type="GO" id="GO:0003700">
    <property type="term" value="F:DNA-binding transcription factor activity"/>
    <property type="evidence" value="ECO:0000314"/>
    <property type="project" value="UniProtKB"/>
</dbReference>
<dbReference type="GO" id="GO:0000981">
    <property type="term" value="F:DNA-binding transcription factor activity, RNA polymerase II-specific"/>
    <property type="evidence" value="ECO:0000304"/>
    <property type="project" value="MGI"/>
</dbReference>
<dbReference type="GO" id="GO:0070888">
    <property type="term" value="F:E-box binding"/>
    <property type="evidence" value="ECO:0000314"/>
    <property type="project" value="UniProtKB"/>
</dbReference>
<dbReference type="GO" id="GO:0046983">
    <property type="term" value="F:protein dimerization activity"/>
    <property type="evidence" value="ECO:0007669"/>
    <property type="project" value="InterPro"/>
</dbReference>
<dbReference type="GO" id="GO:0000978">
    <property type="term" value="F:RNA polymerase II cis-regulatory region sequence-specific DNA binding"/>
    <property type="evidence" value="ECO:0000314"/>
    <property type="project" value="NTNU_SB"/>
</dbReference>
<dbReference type="GO" id="GO:0000977">
    <property type="term" value="F:RNA polymerase II transcription regulatory region sequence-specific DNA binding"/>
    <property type="evidence" value="ECO:0000314"/>
    <property type="project" value="BHF-UCL"/>
</dbReference>
<dbReference type="GO" id="GO:0043565">
    <property type="term" value="F:sequence-specific DNA binding"/>
    <property type="evidence" value="ECO:0000314"/>
    <property type="project" value="MGI"/>
</dbReference>
<dbReference type="GO" id="GO:0071392">
    <property type="term" value="P:cellular response to estradiol stimulus"/>
    <property type="evidence" value="ECO:0000314"/>
    <property type="project" value="UniProtKB"/>
</dbReference>
<dbReference type="GO" id="GO:0071363">
    <property type="term" value="P:cellular response to growth factor stimulus"/>
    <property type="evidence" value="ECO:0000314"/>
    <property type="project" value="MGI"/>
</dbReference>
<dbReference type="GO" id="GO:0071285">
    <property type="term" value="P:cellular response to lithium ion"/>
    <property type="evidence" value="ECO:0000314"/>
    <property type="project" value="MGI"/>
</dbReference>
<dbReference type="GO" id="GO:0071356">
    <property type="term" value="P:cellular response to tumor necrosis factor"/>
    <property type="evidence" value="ECO:0000314"/>
    <property type="project" value="MGI"/>
</dbReference>
<dbReference type="GO" id="GO:0042692">
    <property type="term" value="P:muscle cell differentiation"/>
    <property type="evidence" value="ECO:0000314"/>
    <property type="project" value="ARUK-UCL"/>
</dbReference>
<dbReference type="GO" id="GO:0007517">
    <property type="term" value="P:muscle organ development"/>
    <property type="evidence" value="ECO:0000316"/>
    <property type="project" value="MGI"/>
</dbReference>
<dbReference type="GO" id="GO:0014902">
    <property type="term" value="P:myotube differentiation"/>
    <property type="evidence" value="ECO:0000316"/>
    <property type="project" value="MGI"/>
</dbReference>
<dbReference type="GO" id="GO:0008285">
    <property type="term" value="P:negative regulation of cell population proliferation"/>
    <property type="evidence" value="ECO:0000314"/>
    <property type="project" value="UniProtKB"/>
</dbReference>
<dbReference type="GO" id="GO:0001503">
    <property type="term" value="P:ossification"/>
    <property type="evidence" value="ECO:0000315"/>
    <property type="project" value="MGI"/>
</dbReference>
<dbReference type="GO" id="GO:0045893">
    <property type="term" value="P:positive regulation of DNA-templated transcription"/>
    <property type="evidence" value="ECO:0000314"/>
    <property type="project" value="MGI"/>
</dbReference>
<dbReference type="GO" id="GO:0014737">
    <property type="term" value="P:positive regulation of muscle atrophy"/>
    <property type="evidence" value="ECO:0000315"/>
    <property type="project" value="UniProtKB"/>
</dbReference>
<dbReference type="GO" id="GO:0045663">
    <property type="term" value="P:positive regulation of myoblast differentiation"/>
    <property type="evidence" value="ECO:0000314"/>
    <property type="project" value="UniProtKB"/>
</dbReference>
<dbReference type="GO" id="GO:0010831">
    <property type="term" value="P:positive regulation of myotube differentiation"/>
    <property type="evidence" value="ECO:0000314"/>
    <property type="project" value="UniProtKB"/>
</dbReference>
<dbReference type="GO" id="GO:0048743">
    <property type="term" value="P:positive regulation of skeletal muscle fiber development"/>
    <property type="evidence" value="ECO:0000315"/>
    <property type="project" value="UniProtKB"/>
</dbReference>
<dbReference type="GO" id="GO:0045944">
    <property type="term" value="P:positive regulation of transcription by RNA polymerase II"/>
    <property type="evidence" value="ECO:0000314"/>
    <property type="project" value="UniProtKB"/>
</dbReference>
<dbReference type="GO" id="GO:0051726">
    <property type="term" value="P:regulation of cell cycle"/>
    <property type="evidence" value="ECO:0000314"/>
    <property type="project" value="UniProtKB"/>
</dbReference>
<dbReference type="GO" id="GO:1901739">
    <property type="term" value="P:regulation of myoblast fusion"/>
    <property type="evidence" value="ECO:0000315"/>
    <property type="project" value="UniProtKB"/>
</dbReference>
<dbReference type="GO" id="GO:0014842">
    <property type="term" value="P:regulation of skeletal muscle satellite cell proliferation"/>
    <property type="evidence" value="ECO:0000315"/>
    <property type="project" value="UniProtKB"/>
</dbReference>
<dbReference type="GO" id="GO:0014894">
    <property type="term" value="P:response to denervation involved in regulation of muscle adaptation"/>
    <property type="evidence" value="ECO:0000314"/>
    <property type="project" value="UniProtKB"/>
</dbReference>
<dbReference type="GO" id="GO:0014878">
    <property type="term" value="P:response to electrical stimulus involved in regulation of muscle adaptation"/>
    <property type="evidence" value="ECO:0000250"/>
    <property type="project" value="UniProtKB"/>
</dbReference>
<dbReference type="GO" id="GO:0014873">
    <property type="term" value="P:response to muscle activity involved in regulation of muscle adaptation"/>
    <property type="evidence" value="ECO:0000250"/>
    <property type="project" value="UniProtKB"/>
</dbReference>
<dbReference type="GO" id="GO:0048741">
    <property type="term" value="P:skeletal muscle fiber development"/>
    <property type="evidence" value="ECO:0000315"/>
    <property type="project" value="MGI"/>
</dbReference>
<dbReference type="GO" id="GO:0007519">
    <property type="term" value="P:skeletal muscle tissue development"/>
    <property type="evidence" value="ECO:0000314"/>
    <property type="project" value="MGI"/>
</dbReference>
<dbReference type="GO" id="GO:0014891">
    <property type="term" value="P:striated muscle atrophy"/>
    <property type="evidence" value="ECO:0000315"/>
    <property type="project" value="UniProtKB"/>
</dbReference>
<dbReference type="CDD" id="cd18935">
    <property type="entry name" value="bHLH_TS_MYOG_Myf4"/>
    <property type="match status" value="1"/>
</dbReference>
<dbReference type="FunFam" id="4.10.280.10:FF:000005">
    <property type="entry name" value="Myogenic factor"/>
    <property type="match status" value="1"/>
</dbReference>
<dbReference type="Gene3D" id="4.10.280.10">
    <property type="entry name" value="Helix-loop-helix DNA-binding domain"/>
    <property type="match status" value="1"/>
</dbReference>
<dbReference type="InterPro" id="IPR011598">
    <property type="entry name" value="bHLH_dom"/>
</dbReference>
<dbReference type="InterPro" id="IPR036638">
    <property type="entry name" value="HLH_DNA-bd_sf"/>
</dbReference>
<dbReference type="InterPro" id="IPR002546">
    <property type="entry name" value="MyoD_N"/>
</dbReference>
<dbReference type="InterPro" id="IPR039704">
    <property type="entry name" value="Myogenic_factor"/>
</dbReference>
<dbReference type="PANTHER" id="PTHR11534">
    <property type="entry name" value="MYOGENIC FACTOR"/>
    <property type="match status" value="1"/>
</dbReference>
<dbReference type="PANTHER" id="PTHR11534:SF5">
    <property type="entry name" value="MYOGENIN"/>
    <property type="match status" value="1"/>
</dbReference>
<dbReference type="Pfam" id="PF01586">
    <property type="entry name" value="Basic"/>
    <property type="match status" value="1"/>
</dbReference>
<dbReference type="Pfam" id="PF00010">
    <property type="entry name" value="HLH"/>
    <property type="match status" value="1"/>
</dbReference>
<dbReference type="SMART" id="SM00520">
    <property type="entry name" value="BASIC"/>
    <property type="match status" value="1"/>
</dbReference>
<dbReference type="SMART" id="SM00353">
    <property type="entry name" value="HLH"/>
    <property type="match status" value="1"/>
</dbReference>
<dbReference type="SUPFAM" id="SSF47459">
    <property type="entry name" value="HLH, helix-loop-helix DNA-binding domain"/>
    <property type="match status" value="1"/>
</dbReference>
<dbReference type="PROSITE" id="PS50888">
    <property type="entry name" value="BHLH"/>
    <property type="match status" value="1"/>
</dbReference>
<protein>
    <recommendedName>
        <fullName>Myogenin</fullName>
    </recommendedName>
    <alternativeName>
        <fullName>MYOD1-related protein</fullName>
    </alternativeName>
</protein>